<sequence>MSLFPVIVVFGLSFPPIFFELLLSLAIFWLVRRVLVPTGIYDFVWHPALFNTALYCCLFYLISRLFV</sequence>
<keyword id="KW-1003">Cell membrane</keyword>
<keyword id="KW-0472">Membrane</keyword>
<keyword id="KW-1185">Reference proteome</keyword>
<keyword id="KW-0812">Transmembrane</keyword>
<keyword id="KW-1133">Transmembrane helix</keyword>
<evidence type="ECO:0000255" key="1">
    <source>
        <dbReference type="HAMAP-Rule" id="MF_01546"/>
    </source>
</evidence>
<feature type="chain" id="PRO_1000185284" description="Protein AaeX">
    <location>
        <begin position="1"/>
        <end position="67"/>
    </location>
</feature>
<feature type="transmembrane region" description="Helical" evidence="1">
    <location>
        <begin position="3"/>
        <end position="23"/>
    </location>
</feature>
<feature type="transmembrane region" description="Helical" evidence="1">
    <location>
        <begin position="43"/>
        <end position="63"/>
    </location>
</feature>
<reference key="1">
    <citation type="journal article" date="2009" name="PLoS Genet.">
        <title>Organised genome dynamics in the Escherichia coli species results in highly diverse adaptive paths.</title>
        <authorList>
            <person name="Touchon M."/>
            <person name="Hoede C."/>
            <person name="Tenaillon O."/>
            <person name="Barbe V."/>
            <person name="Baeriswyl S."/>
            <person name="Bidet P."/>
            <person name="Bingen E."/>
            <person name="Bonacorsi S."/>
            <person name="Bouchier C."/>
            <person name="Bouvet O."/>
            <person name="Calteau A."/>
            <person name="Chiapello H."/>
            <person name="Clermont O."/>
            <person name="Cruveiller S."/>
            <person name="Danchin A."/>
            <person name="Diard M."/>
            <person name="Dossat C."/>
            <person name="Karoui M.E."/>
            <person name="Frapy E."/>
            <person name="Garry L."/>
            <person name="Ghigo J.M."/>
            <person name="Gilles A.M."/>
            <person name="Johnson J."/>
            <person name="Le Bouguenec C."/>
            <person name="Lescat M."/>
            <person name="Mangenot S."/>
            <person name="Martinez-Jehanne V."/>
            <person name="Matic I."/>
            <person name="Nassif X."/>
            <person name="Oztas S."/>
            <person name="Petit M.A."/>
            <person name="Pichon C."/>
            <person name="Rouy Z."/>
            <person name="Ruf C.S."/>
            <person name="Schneider D."/>
            <person name="Tourret J."/>
            <person name="Vacherie B."/>
            <person name="Vallenet D."/>
            <person name="Medigue C."/>
            <person name="Rocha E.P.C."/>
            <person name="Denamur E."/>
        </authorList>
    </citation>
    <scope>NUCLEOTIDE SEQUENCE [LARGE SCALE GENOMIC DNA]</scope>
    <source>
        <strain>55989 / EAEC</strain>
    </source>
</reference>
<dbReference type="EMBL" id="CU928145">
    <property type="protein sequence ID" value="CAU99913.1"/>
    <property type="molecule type" value="Genomic_DNA"/>
</dbReference>
<dbReference type="RefSeq" id="WP_000051841.1">
    <property type="nucleotide sequence ID" value="NZ_CP028304.1"/>
</dbReference>
<dbReference type="GeneID" id="93778743"/>
<dbReference type="KEGG" id="eck:EC55989_3655"/>
<dbReference type="HOGENOM" id="CLU_188292_0_0_6"/>
<dbReference type="Proteomes" id="UP000000746">
    <property type="component" value="Chromosome"/>
</dbReference>
<dbReference type="GO" id="GO:0005886">
    <property type="term" value="C:plasma membrane"/>
    <property type="evidence" value="ECO:0007669"/>
    <property type="project" value="UniProtKB-SubCell"/>
</dbReference>
<dbReference type="HAMAP" id="MF_01546">
    <property type="entry name" value="AaeX"/>
    <property type="match status" value="1"/>
</dbReference>
<dbReference type="InterPro" id="IPR012451">
    <property type="entry name" value="DUF1656"/>
</dbReference>
<dbReference type="NCBIfam" id="NF008615">
    <property type="entry name" value="PRK11594.1"/>
    <property type="match status" value="1"/>
</dbReference>
<dbReference type="Pfam" id="PF07869">
    <property type="entry name" value="DUF1656"/>
    <property type="match status" value="1"/>
</dbReference>
<comment type="subcellular location">
    <subcellularLocation>
        <location evidence="1">Cell membrane</location>
        <topology evidence="1">Multi-pass membrane protein</topology>
    </subcellularLocation>
</comment>
<comment type="induction">
    <text evidence="1">Positively coregulated with aaeA and aaeB by AaeR.</text>
</comment>
<comment type="similarity">
    <text evidence="1">Belongs to the AaeX family.</text>
</comment>
<name>AAEX_ECO55</name>
<accession>B7LHV0</accession>
<protein>
    <recommendedName>
        <fullName evidence="1">Protein AaeX</fullName>
    </recommendedName>
</protein>
<organism>
    <name type="scientific">Escherichia coli (strain 55989 / EAEC)</name>
    <dbReference type="NCBI Taxonomy" id="585055"/>
    <lineage>
        <taxon>Bacteria</taxon>
        <taxon>Pseudomonadati</taxon>
        <taxon>Pseudomonadota</taxon>
        <taxon>Gammaproteobacteria</taxon>
        <taxon>Enterobacterales</taxon>
        <taxon>Enterobacteriaceae</taxon>
        <taxon>Escherichia</taxon>
    </lineage>
</organism>
<gene>
    <name evidence="1" type="primary">aaeX</name>
    <name type="ordered locus">EC55989_3655</name>
</gene>
<proteinExistence type="inferred from homology"/>